<keyword id="KW-1003">Cell membrane</keyword>
<keyword id="KW-0141">cGMP biosynthesis</keyword>
<keyword id="KW-0325">Glycoprotein</keyword>
<keyword id="KW-0342">GTP-binding</keyword>
<keyword id="KW-0456">Lyase</keyword>
<keyword id="KW-0472">Membrane</keyword>
<keyword id="KW-0547">Nucleotide-binding</keyword>
<keyword id="KW-0675">Receptor</keyword>
<keyword id="KW-1185">Reference proteome</keyword>
<keyword id="KW-0732">Signal</keyword>
<keyword id="KW-0812">Transmembrane</keyword>
<keyword id="KW-1133">Transmembrane helix</keyword>
<sequence>MRLLYFSMVLLWVLGASECQVIPSSRRTLRVGIAAAQDTQSGSIGWASCGGTLPIAVQYLKSKGFLTDFDVEYYMEYTECDRASVAKAGMKFMKEMNVDVVVGPSCGDALAIMGTLSAIYKKLVLGWGFVSDTQLADTNRFPYVASVQPTAQTLGLATSRILEMFQFDRVALLYYKDDQDYCKSVMDDVEATLSDPDLYPVRIVWKGELQSDNEALTRSTLQAVKSRARIVLLCAISGPEKRNYLISIAQQNMTTNEYVHILLTMRSIGYGVQTSLGKKTFANGLTPLWESFTVAPDGNETNARRAAEKMLVIDVNSDVQDAEFLQYLTKNIADAVRNPPMKCNTSECINASSTSMGSYARHLFDVFYLYGMAVSKLNSTDPTVYGNLNLLMPQMVTSFDGMTGRVQIGQNLYRVPTYQLYGLDEKYEQVALVNMTFYNSSSQLSRGYSDEGRSVWHFWDGTRPLDTPICGFSGRYCPVQFWDQYGVLIFVASIVLIFLICIMLMCFGFMIRGRRAEQERLNSEWQIPSIQLIMPQKEKRKPNSRRSLQSGPSTITGESKMTIDGGFHENYTVQMFEKDLVLTTKHHSMQMNKEEKEKFVKLRKLEHDNLNKFIGLSIDGPQFVAVWKMCSRGSLQDIIARGNFSMDGFFMFCIITDIAEGMNFLHKSFLHLHGNLRSATCLVNDSWQVKLTDFGLGALLEEHTPSKKRLLWAAPEVLRGSLTIHQMDPSADVYSFAIIASEILTKREAWDISNRKEGADEILYMVKKGGNRTIRPELILDAEVSPRLTTLVKDCWSEQPEDRPKAEQICKLLSEMTPRGNTNLMDHVFNMLEEYTSTLEVDIEERTKELTLEKKKADILLSRMLPKQVAERLKAGQTVEPEGFDTVTVLFSDVVKFTQLAAKCSPFQVVNLLNDLYSNFDTIIEEHGVYKVESIGDGYLCVSGLPTKNGYAHIKQIVDMSLKFMDYCKSFKVPHLPREKVELRIGINSGPCVAGVVGLSMPRYCLFGDTVNTASRMESNGKPSMIHMSEAAHSLLTDHYPHQYETSSRGEVIIKGKGVMETFWVLGKTDSDTKSLSTRTTPPITDENWPPQMKEDLKKRAVTPYPERQRSGKSKMDTLKVV</sequence>
<comment type="function">
    <text evidence="1 8">Guanylate cyclase involved in the production of the second messenger cGMP (By similarity). Unlike other guanylate cyclases expressed in ASE neurons, may not play a role in chemotaxis responses to salt ions mediated by ASE sensory neurons (PubMed:19523832).</text>
</comment>
<comment type="catalytic activity">
    <reaction evidence="1">
        <text>GTP = 3',5'-cyclic GMP + diphosphate</text>
        <dbReference type="Rhea" id="RHEA:13665"/>
        <dbReference type="ChEBI" id="CHEBI:33019"/>
        <dbReference type="ChEBI" id="CHEBI:37565"/>
        <dbReference type="ChEBI" id="CHEBI:57746"/>
        <dbReference type="EC" id="4.6.1.2"/>
    </reaction>
</comment>
<comment type="subcellular location">
    <subcellularLocation>
        <location evidence="10">Cell membrane</location>
        <topology evidence="10">Single-pass type I membrane protein</topology>
    </subcellularLocation>
</comment>
<comment type="tissue specificity">
    <text evidence="7 9">Expressed in both ASEL and ASER neurons during early embryonic stages and becomes specifically expressed in ASER neuron in early larval stage.</text>
</comment>
<comment type="domain">
    <text evidence="4">The protein kinase domain is predicted to be catalytically inactive.</text>
</comment>
<comment type="similarity">
    <text evidence="3">Belongs to the adenylyl cyclase class-4/guanylyl cyclase family.</text>
</comment>
<evidence type="ECO:0000250" key="1">
    <source>
        <dbReference type="UniProtKB" id="Q19187"/>
    </source>
</evidence>
<evidence type="ECO:0000255" key="2"/>
<evidence type="ECO:0000255" key="3">
    <source>
        <dbReference type="PROSITE-ProRule" id="PRU00099"/>
    </source>
</evidence>
<evidence type="ECO:0000255" key="4">
    <source>
        <dbReference type="PROSITE-ProRule" id="PRU00159"/>
    </source>
</evidence>
<evidence type="ECO:0000255" key="5">
    <source>
        <dbReference type="PROSITE-ProRule" id="PRU00498"/>
    </source>
</evidence>
<evidence type="ECO:0000256" key="6">
    <source>
        <dbReference type="SAM" id="MobiDB-lite"/>
    </source>
</evidence>
<evidence type="ECO:0000269" key="7">
    <source>
    </source>
</evidence>
<evidence type="ECO:0000269" key="8">
    <source>
    </source>
</evidence>
<evidence type="ECO:0000269" key="9">
    <source>
    </source>
</evidence>
<evidence type="ECO:0000305" key="10"/>
<evidence type="ECO:0000312" key="11">
    <source>
        <dbReference type="Proteomes" id="UP000001940"/>
    </source>
</evidence>
<evidence type="ECO:0000312" key="12">
    <source>
        <dbReference type="WormBase" id="ZK970.6"/>
    </source>
</evidence>
<accession>Q23682</accession>
<proteinExistence type="evidence at transcript level"/>
<protein>
    <recommendedName>
        <fullName evidence="10">Receptor-type guanylate cyclase gcy-5</fullName>
        <ecNumber evidence="1">4.6.1.2</ecNumber>
    </recommendedName>
</protein>
<feature type="signal peptide" evidence="2">
    <location>
        <begin position="1"/>
        <end position="19"/>
    </location>
</feature>
<feature type="chain" id="PRO_0000433274" description="Receptor-type guanylate cyclase gcy-5" evidence="2">
    <location>
        <begin position="20"/>
        <end position="1122"/>
    </location>
</feature>
<feature type="topological domain" description="Extracellular" evidence="2">
    <location>
        <begin position="20"/>
        <end position="486"/>
    </location>
</feature>
<feature type="transmembrane region" description="Helical" evidence="2">
    <location>
        <begin position="487"/>
        <end position="507"/>
    </location>
</feature>
<feature type="topological domain" description="Cytoplasmic" evidence="2">
    <location>
        <begin position="508"/>
        <end position="1122"/>
    </location>
</feature>
<feature type="domain" description="Protein kinase" evidence="4">
    <location>
        <begin position="542"/>
        <end position="830"/>
    </location>
</feature>
<feature type="domain" description="Guanylate cyclase" evidence="3">
    <location>
        <begin position="888"/>
        <end position="1018"/>
    </location>
</feature>
<feature type="region of interest" description="Disordered" evidence="6">
    <location>
        <begin position="536"/>
        <end position="562"/>
    </location>
</feature>
<feature type="region of interest" description="Disordered" evidence="6">
    <location>
        <begin position="1071"/>
        <end position="1122"/>
    </location>
</feature>
<feature type="compositionally biased region" description="Polar residues" evidence="6">
    <location>
        <begin position="545"/>
        <end position="559"/>
    </location>
</feature>
<feature type="compositionally biased region" description="Polar residues" evidence="6">
    <location>
        <begin position="1074"/>
        <end position="1083"/>
    </location>
</feature>
<feature type="compositionally biased region" description="Basic and acidic residues" evidence="6">
    <location>
        <begin position="1107"/>
        <end position="1122"/>
    </location>
</feature>
<feature type="glycosylation site" description="N-linked (GlcNAc...) asparagine" evidence="5">
    <location>
        <position position="252"/>
    </location>
</feature>
<feature type="glycosylation site" description="N-linked (GlcNAc...) asparagine" evidence="5">
    <location>
        <position position="299"/>
    </location>
</feature>
<feature type="glycosylation site" description="N-linked (GlcNAc...) asparagine" evidence="5">
    <location>
        <position position="344"/>
    </location>
</feature>
<feature type="glycosylation site" description="N-linked (GlcNAc...) asparagine" evidence="5">
    <location>
        <position position="350"/>
    </location>
</feature>
<feature type="glycosylation site" description="N-linked (GlcNAc...) asparagine" evidence="5">
    <location>
        <position position="378"/>
    </location>
</feature>
<feature type="glycosylation site" description="N-linked (GlcNAc...) asparagine" evidence="5">
    <location>
        <position position="434"/>
    </location>
</feature>
<feature type="glycosylation site" description="N-linked (GlcNAc...) asparagine" evidence="5">
    <location>
        <position position="439"/>
    </location>
</feature>
<reference evidence="11" key="1">
    <citation type="journal article" date="1998" name="Science">
        <title>Genome sequence of the nematode C. elegans: a platform for investigating biology.</title>
        <authorList>
            <consortium name="The C. elegans sequencing consortium"/>
        </authorList>
    </citation>
    <scope>NUCLEOTIDE SEQUENCE [LARGE SCALE GENOMIC DNA]</scope>
    <source>
        <strain evidence="11">Bristol N2</strain>
    </source>
</reference>
<reference evidence="10" key="2">
    <citation type="journal article" date="1997" name="Proc. Natl. Acad. Sci. U.S.A.">
        <title>Guanylyl cyclase expression in specific sensory neurons: a new family of chemosensory receptors.</title>
        <authorList>
            <person name="Yu S."/>
            <person name="Avery L."/>
            <person name="Baude E."/>
            <person name="Garbers D.L."/>
        </authorList>
    </citation>
    <scope>TISSUE SPECIFICITY</scope>
</reference>
<reference evidence="10" key="3">
    <citation type="journal article" date="2005" name="Proc. Natl. Acad. Sci. U.S.A.">
        <title>MicroRNAs acting in a double-negative feedback loop to control a neuronal cell fate decision.</title>
        <authorList>
            <person name="Johnston R.J. Jr."/>
            <person name="Chang S."/>
            <person name="Etchberger J.F."/>
            <person name="Ortiz C.O."/>
            <person name="Hobert O."/>
        </authorList>
    </citation>
    <scope>TISSUE SPECIFICITY</scope>
</reference>
<reference evidence="10" key="4">
    <citation type="journal article" date="2009" name="Curr. Biol.">
        <title>Lateralized gustatory behavior of C. elegans is controlled by specific receptor-type guanylyl cyclases.</title>
        <authorList>
            <person name="Ortiz C.O."/>
            <person name="Faumont S."/>
            <person name="Takayama J."/>
            <person name="Ahmed H.K."/>
            <person name="Goldsmith A.D."/>
            <person name="Pocock R."/>
            <person name="McCormick K.E."/>
            <person name="Kunimoto H."/>
            <person name="Iino Y."/>
            <person name="Lockery S."/>
            <person name="Hobert O."/>
        </authorList>
    </citation>
    <scope>FUNCTION</scope>
</reference>
<name>GCY5_CAEEL</name>
<dbReference type="EC" id="4.6.1.2" evidence="1"/>
<dbReference type="EMBL" id="BX284602">
    <property type="protein sequence ID" value="CAA88890.1"/>
    <property type="molecule type" value="Genomic_DNA"/>
</dbReference>
<dbReference type="PIR" id="T28130">
    <property type="entry name" value="T28130"/>
</dbReference>
<dbReference type="RefSeq" id="NP_496219.1">
    <property type="nucleotide sequence ID" value="NM_063818.1"/>
</dbReference>
<dbReference type="SMR" id="Q23682"/>
<dbReference type="FunCoup" id="Q23682">
    <property type="interactions" value="73"/>
</dbReference>
<dbReference type="STRING" id="6239.ZK970.6.1"/>
<dbReference type="GlyCosmos" id="Q23682">
    <property type="glycosylation" value="7 sites, No reported glycans"/>
</dbReference>
<dbReference type="PaxDb" id="6239-ZK970.6"/>
<dbReference type="EnsemblMetazoa" id="ZK970.6.1">
    <property type="protein sequence ID" value="ZK970.6.1"/>
    <property type="gene ID" value="WBGene00001532"/>
</dbReference>
<dbReference type="GeneID" id="191643"/>
<dbReference type="KEGG" id="cel:CELE_ZK970.6"/>
<dbReference type="AGR" id="WB:WBGene00001532"/>
<dbReference type="CTD" id="191643"/>
<dbReference type="WormBase" id="ZK970.6">
    <property type="protein sequence ID" value="CE02406"/>
    <property type="gene ID" value="WBGene00001532"/>
    <property type="gene designation" value="gcy-5"/>
</dbReference>
<dbReference type="eggNOG" id="KOG1023">
    <property type="taxonomic scope" value="Eukaryota"/>
</dbReference>
<dbReference type="HOGENOM" id="CLU_001072_1_3_1"/>
<dbReference type="InParanoid" id="Q23682"/>
<dbReference type="OMA" id="DENWPPQ"/>
<dbReference type="OrthoDB" id="4062651at2759"/>
<dbReference type="PhylomeDB" id="Q23682"/>
<dbReference type="Reactome" id="R-CEL-2514859">
    <property type="pathway name" value="Inactivation, recovery and regulation of the phototransduction cascade"/>
</dbReference>
<dbReference type="PRO" id="PR:Q23682"/>
<dbReference type="Proteomes" id="UP000001940">
    <property type="component" value="Chromosome II"/>
</dbReference>
<dbReference type="Bgee" id="WBGene00001532">
    <property type="expression patterns" value="Expressed in adult organism"/>
</dbReference>
<dbReference type="GO" id="GO:0005929">
    <property type="term" value="C:cilium"/>
    <property type="evidence" value="ECO:0000314"/>
    <property type="project" value="UniProtKB"/>
</dbReference>
<dbReference type="GO" id="GO:0005886">
    <property type="term" value="C:plasma membrane"/>
    <property type="evidence" value="ECO:0000318"/>
    <property type="project" value="GO_Central"/>
</dbReference>
<dbReference type="GO" id="GO:0005524">
    <property type="term" value="F:ATP binding"/>
    <property type="evidence" value="ECO:0007669"/>
    <property type="project" value="InterPro"/>
</dbReference>
<dbReference type="GO" id="GO:0005525">
    <property type="term" value="F:GTP binding"/>
    <property type="evidence" value="ECO:0007669"/>
    <property type="project" value="UniProtKB-KW"/>
</dbReference>
<dbReference type="GO" id="GO:0004383">
    <property type="term" value="F:guanylate cyclase activity"/>
    <property type="evidence" value="ECO:0000318"/>
    <property type="project" value="GO_Central"/>
</dbReference>
<dbReference type="GO" id="GO:0001653">
    <property type="term" value="F:peptide receptor activity"/>
    <property type="evidence" value="ECO:0000318"/>
    <property type="project" value="GO_Central"/>
</dbReference>
<dbReference type="GO" id="GO:0004672">
    <property type="term" value="F:protein kinase activity"/>
    <property type="evidence" value="ECO:0007669"/>
    <property type="project" value="InterPro"/>
</dbReference>
<dbReference type="GO" id="GO:0006182">
    <property type="term" value="P:cGMP biosynthetic process"/>
    <property type="evidence" value="ECO:0000318"/>
    <property type="project" value="GO_Central"/>
</dbReference>
<dbReference type="GO" id="GO:0007635">
    <property type="term" value="P:chemosensory behavior"/>
    <property type="evidence" value="ECO:0000315"/>
    <property type="project" value="UniProtKB"/>
</dbReference>
<dbReference type="GO" id="GO:0006935">
    <property type="term" value="P:chemotaxis"/>
    <property type="evidence" value="ECO:0000315"/>
    <property type="project" value="UniProtKB"/>
</dbReference>
<dbReference type="GO" id="GO:0035556">
    <property type="term" value="P:intracellular signal transduction"/>
    <property type="evidence" value="ECO:0007669"/>
    <property type="project" value="InterPro"/>
</dbReference>
<dbReference type="GO" id="GO:0007168">
    <property type="term" value="P:receptor guanylyl cyclase signaling pathway"/>
    <property type="evidence" value="ECO:0000318"/>
    <property type="project" value="GO_Central"/>
</dbReference>
<dbReference type="GO" id="GO:1902074">
    <property type="term" value="P:response to salt"/>
    <property type="evidence" value="ECO:0000315"/>
    <property type="project" value="UniProtKB"/>
</dbReference>
<dbReference type="CDD" id="cd07302">
    <property type="entry name" value="CHD"/>
    <property type="match status" value="1"/>
</dbReference>
<dbReference type="CDD" id="cd06352">
    <property type="entry name" value="PBP1_NPR_GC-like"/>
    <property type="match status" value="1"/>
</dbReference>
<dbReference type="CDD" id="cd13992">
    <property type="entry name" value="PK_GC"/>
    <property type="match status" value="1"/>
</dbReference>
<dbReference type="FunFam" id="3.30.70.1230:FF:000023">
    <property type="entry name" value="Guanylate cyclase"/>
    <property type="match status" value="1"/>
</dbReference>
<dbReference type="FunFam" id="3.40.50.2300:FF:000447">
    <property type="entry name" value="Receptor-type guanylate cyclase gcy-19"/>
    <property type="match status" value="1"/>
</dbReference>
<dbReference type="FunFam" id="1.10.510.10:FF:001114">
    <property type="entry name" value="Receptor-type guanylate cyclase gcy-4"/>
    <property type="match status" value="1"/>
</dbReference>
<dbReference type="Gene3D" id="3.40.50.2300">
    <property type="match status" value="2"/>
</dbReference>
<dbReference type="Gene3D" id="3.30.70.1230">
    <property type="entry name" value="Nucleotide cyclase"/>
    <property type="match status" value="1"/>
</dbReference>
<dbReference type="Gene3D" id="1.10.510.10">
    <property type="entry name" value="Transferase(Phosphotransferase) domain 1"/>
    <property type="match status" value="1"/>
</dbReference>
<dbReference type="InterPro" id="IPR001054">
    <property type="entry name" value="A/G_cyclase"/>
</dbReference>
<dbReference type="InterPro" id="IPR018297">
    <property type="entry name" value="A/G_cyclase_CS"/>
</dbReference>
<dbReference type="InterPro" id="IPR001828">
    <property type="entry name" value="ANF_lig-bd_rcpt"/>
</dbReference>
<dbReference type="InterPro" id="IPR050401">
    <property type="entry name" value="Cyclic_nucleotide_synthase"/>
</dbReference>
<dbReference type="InterPro" id="IPR011009">
    <property type="entry name" value="Kinase-like_dom_sf"/>
</dbReference>
<dbReference type="InterPro" id="IPR029787">
    <property type="entry name" value="Nucleotide_cyclase"/>
</dbReference>
<dbReference type="InterPro" id="IPR028082">
    <property type="entry name" value="Peripla_BP_I"/>
</dbReference>
<dbReference type="InterPro" id="IPR000719">
    <property type="entry name" value="Prot_kinase_dom"/>
</dbReference>
<dbReference type="InterPro" id="IPR001245">
    <property type="entry name" value="Ser-Thr/Tyr_kinase_cat_dom"/>
</dbReference>
<dbReference type="PANTHER" id="PTHR11920">
    <property type="entry name" value="GUANYLYL CYCLASE"/>
    <property type="match status" value="1"/>
</dbReference>
<dbReference type="PANTHER" id="PTHR11920:SF381">
    <property type="entry name" value="RECEPTOR-TYPE GUANYLATE CYCLASE GCY-5"/>
    <property type="match status" value="1"/>
</dbReference>
<dbReference type="Pfam" id="PF01094">
    <property type="entry name" value="ANF_receptor"/>
    <property type="match status" value="1"/>
</dbReference>
<dbReference type="Pfam" id="PF00211">
    <property type="entry name" value="Guanylate_cyc"/>
    <property type="match status" value="1"/>
</dbReference>
<dbReference type="Pfam" id="PF07714">
    <property type="entry name" value="PK_Tyr_Ser-Thr"/>
    <property type="match status" value="1"/>
</dbReference>
<dbReference type="SMART" id="SM00044">
    <property type="entry name" value="CYCc"/>
    <property type="match status" value="1"/>
</dbReference>
<dbReference type="SUPFAM" id="SSF55073">
    <property type="entry name" value="Nucleotide cyclase"/>
    <property type="match status" value="1"/>
</dbReference>
<dbReference type="SUPFAM" id="SSF53822">
    <property type="entry name" value="Periplasmic binding protein-like I"/>
    <property type="match status" value="1"/>
</dbReference>
<dbReference type="SUPFAM" id="SSF56112">
    <property type="entry name" value="Protein kinase-like (PK-like)"/>
    <property type="match status" value="1"/>
</dbReference>
<dbReference type="PROSITE" id="PS00452">
    <property type="entry name" value="GUANYLATE_CYCLASE_1"/>
    <property type="match status" value="1"/>
</dbReference>
<dbReference type="PROSITE" id="PS50125">
    <property type="entry name" value="GUANYLATE_CYCLASE_2"/>
    <property type="match status" value="1"/>
</dbReference>
<dbReference type="PROSITE" id="PS50011">
    <property type="entry name" value="PROTEIN_KINASE_DOM"/>
    <property type="match status" value="1"/>
</dbReference>
<organism evidence="11">
    <name type="scientific">Caenorhabditis elegans</name>
    <dbReference type="NCBI Taxonomy" id="6239"/>
    <lineage>
        <taxon>Eukaryota</taxon>
        <taxon>Metazoa</taxon>
        <taxon>Ecdysozoa</taxon>
        <taxon>Nematoda</taxon>
        <taxon>Chromadorea</taxon>
        <taxon>Rhabditida</taxon>
        <taxon>Rhabditina</taxon>
        <taxon>Rhabditomorpha</taxon>
        <taxon>Rhabditoidea</taxon>
        <taxon>Rhabditidae</taxon>
        <taxon>Peloderinae</taxon>
        <taxon>Caenorhabditis</taxon>
    </lineage>
</organism>
<gene>
    <name evidence="12" type="primary">gcy-5</name>
    <name evidence="12" type="ORF">ZK970.6</name>
</gene>